<comment type="function">
    <text evidence="1">Probable component of the endoplasmic reticulum-associated degradation (ERAD) pathway.</text>
</comment>
<comment type="similarity">
    <text evidence="3">Belongs to the LCL2 family.</text>
</comment>
<keyword id="KW-1185">Reference proteome</keyword>
<keyword id="KW-0732">Signal</keyword>
<evidence type="ECO:0000250" key="1"/>
<evidence type="ECO:0000255" key="2"/>
<evidence type="ECO:0000305" key="3"/>
<feature type="signal peptide" evidence="2">
    <location>
        <begin position="1"/>
        <end position="17"/>
    </location>
</feature>
<feature type="chain" id="PRO_0000408609" description="Long chronological lifespan protein 2">
    <location>
        <begin position="18"/>
        <end position="127"/>
    </location>
</feature>
<accession>C5DMZ6</accession>
<reference key="1">
    <citation type="journal article" date="2009" name="Genome Res.">
        <title>Comparative genomics of protoploid Saccharomycetaceae.</title>
        <authorList>
            <consortium name="The Genolevures Consortium"/>
            <person name="Souciet J.-L."/>
            <person name="Dujon B."/>
            <person name="Gaillardin C."/>
            <person name="Johnston M."/>
            <person name="Baret P.V."/>
            <person name="Cliften P."/>
            <person name="Sherman D.J."/>
            <person name="Weissenbach J."/>
            <person name="Westhof E."/>
            <person name="Wincker P."/>
            <person name="Jubin C."/>
            <person name="Poulain J."/>
            <person name="Barbe V."/>
            <person name="Segurens B."/>
            <person name="Artiguenave F."/>
            <person name="Anthouard V."/>
            <person name="Vacherie B."/>
            <person name="Val M.-E."/>
            <person name="Fulton R.S."/>
            <person name="Minx P."/>
            <person name="Wilson R."/>
            <person name="Durrens P."/>
            <person name="Jean G."/>
            <person name="Marck C."/>
            <person name="Martin T."/>
            <person name="Nikolski M."/>
            <person name="Rolland T."/>
            <person name="Seret M.-L."/>
            <person name="Casaregola S."/>
            <person name="Despons L."/>
            <person name="Fairhead C."/>
            <person name="Fischer G."/>
            <person name="Lafontaine I."/>
            <person name="Leh V."/>
            <person name="Lemaire M."/>
            <person name="de Montigny J."/>
            <person name="Neuveglise C."/>
            <person name="Thierry A."/>
            <person name="Blanc-Lenfle I."/>
            <person name="Bleykasten C."/>
            <person name="Diffels J."/>
            <person name="Fritsch E."/>
            <person name="Frangeul L."/>
            <person name="Goeffon A."/>
            <person name="Jauniaux N."/>
            <person name="Kachouri-Lafond R."/>
            <person name="Payen C."/>
            <person name="Potier S."/>
            <person name="Pribylova L."/>
            <person name="Ozanne C."/>
            <person name="Richard G.-F."/>
            <person name="Sacerdot C."/>
            <person name="Straub M.-L."/>
            <person name="Talla E."/>
        </authorList>
    </citation>
    <scope>NUCLEOTIDE SEQUENCE [LARGE SCALE GENOMIC DNA]</scope>
    <source>
        <strain>ATCC 56472 / CBS 6340 / NRRL Y-8284</strain>
    </source>
</reference>
<protein>
    <recommendedName>
        <fullName>Long chronological lifespan protein 2</fullName>
    </recommendedName>
</protein>
<proteinExistence type="inferred from homology"/>
<organism>
    <name type="scientific">Lachancea thermotolerans (strain ATCC 56472 / CBS 6340 / NRRL Y-8284)</name>
    <name type="common">Yeast</name>
    <name type="synonym">Kluyveromyces thermotolerans</name>
    <dbReference type="NCBI Taxonomy" id="559295"/>
    <lineage>
        <taxon>Eukaryota</taxon>
        <taxon>Fungi</taxon>
        <taxon>Dikarya</taxon>
        <taxon>Ascomycota</taxon>
        <taxon>Saccharomycotina</taxon>
        <taxon>Saccharomycetes</taxon>
        <taxon>Saccharomycetales</taxon>
        <taxon>Saccharomycetaceae</taxon>
        <taxon>Lachancea</taxon>
    </lineage>
</organism>
<dbReference type="EMBL" id="CU928171">
    <property type="protein sequence ID" value="CAR25157.1"/>
    <property type="molecule type" value="Genomic_DNA"/>
</dbReference>
<dbReference type="RefSeq" id="XP_002555594.1">
    <property type="nucleotide sequence ID" value="XM_002555548.1"/>
</dbReference>
<dbReference type="FunCoup" id="C5DMZ6">
    <property type="interactions" value="28"/>
</dbReference>
<dbReference type="STRING" id="559295.C5DMZ6"/>
<dbReference type="GeneID" id="8293877"/>
<dbReference type="KEGG" id="lth:KLTH0G12958g"/>
<dbReference type="eggNOG" id="ENOG502S416">
    <property type="taxonomic scope" value="Eukaryota"/>
</dbReference>
<dbReference type="HOGENOM" id="CLU_142363_1_0_1"/>
<dbReference type="InParanoid" id="C5DMZ6"/>
<dbReference type="OMA" id="KPATHDE"/>
<dbReference type="OrthoDB" id="2234316at2759"/>
<dbReference type="Proteomes" id="UP000002036">
    <property type="component" value="Chromosome G"/>
</dbReference>
<dbReference type="GO" id="GO:0036503">
    <property type="term" value="P:ERAD pathway"/>
    <property type="evidence" value="ECO:0007669"/>
    <property type="project" value="TreeGrafter"/>
</dbReference>
<dbReference type="CDD" id="cd23996">
    <property type="entry name" value="LCL2-like"/>
    <property type="match status" value="1"/>
</dbReference>
<dbReference type="InterPro" id="IPR034543">
    <property type="entry name" value="LCL2"/>
</dbReference>
<dbReference type="PANTHER" id="PTHR38425">
    <property type="entry name" value="LONG CHRONOLOGICAL LIFESPAN PROTEIN 2"/>
    <property type="match status" value="1"/>
</dbReference>
<dbReference type="PANTHER" id="PTHR38425:SF1">
    <property type="entry name" value="LONG CHRONOLOGICAL LIFESPAN PROTEIN 2"/>
    <property type="match status" value="1"/>
</dbReference>
<gene>
    <name type="primary">LCL2</name>
    <name type="ordered locus">KLTH0G12958g</name>
</gene>
<sequence>MRGSSLGLYFILPIASGFFFDFNQRNQHEGQQPQVSYEDKVLNNDCADFLCPDTLTCVKTAKDCPCPFPKSQLRCTLPNGQFVCISKPATHDKNLNAIYDDPVKGPQSKIKGLRDCGWVQDAYKGIV</sequence>
<name>LCL2_LACTC</name>